<gene>
    <name type="ordered locus">Os01g0705100</name>
    <name type="ordered locus">LOC_Os01g50900</name>
    <name type="ORF">OsJ_003078</name>
    <name type="ORF">P0684B02.21</name>
    <name type="ORF">P0692C11.2</name>
</gene>
<keyword id="KW-0052">Apoplast</keyword>
<keyword id="KW-1015">Disulfide bond</keyword>
<keyword id="KW-0325">Glycoprotein</keyword>
<keyword id="KW-0464">Manganese</keyword>
<keyword id="KW-0479">Metal-binding</keyword>
<keyword id="KW-1185">Reference proteome</keyword>
<keyword id="KW-0964">Secreted</keyword>
<keyword id="KW-0732">Signal</keyword>
<proteinExistence type="inferred from homology"/>
<organism>
    <name type="scientific">Oryza sativa subsp. japonica</name>
    <name type="common">Rice</name>
    <dbReference type="NCBI Taxonomy" id="39947"/>
    <lineage>
        <taxon>Eukaryota</taxon>
        <taxon>Viridiplantae</taxon>
        <taxon>Streptophyta</taxon>
        <taxon>Embryophyta</taxon>
        <taxon>Tracheophyta</taxon>
        <taxon>Spermatophyta</taxon>
        <taxon>Magnoliopsida</taxon>
        <taxon>Liliopsida</taxon>
        <taxon>Poales</taxon>
        <taxon>Poaceae</taxon>
        <taxon>BOP clade</taxon>
        <taxon>Oryzoideae</taxon>
        <taxon>Oryzeae</taxon>
        <taxon>Oryzinae</taxon>
        <taxon>Oryza</taxon>
        <taxon>Oryza sativa</taxon>
    </lineage>
</organism>
<protein>
    <recommendedName>
        <fullName>Germin-like protein 1-2</fullName>
    </recommendedName>
</protein>
<accession>Q94JF3</accession>
<accession>A0A0P0V739</accession>
<reference key="1">
    <citation type="journal article" date="2002" name="Nature">
        <title>The genome sequence and structure of rice chromosome 1.</title>
        <authorList>
            <person name="Sasaki T."/>
            <person name="Matsumoto T."/>
            <person name="Yamamoto K."/>
            <person name="Sakata K."/>
            <person name="Baba T."/>
            <person name="Katayose Y."/>
            <person name="Wu J."/>
            <person name="Niimura Y."/>
            <person name="Cheng Z."/>
            <person name="Nagamura Y."/>
            <person name="Antonio B.A."/>
            <person name="Kanamori H."/>
            <person name="Hosokawa S."/>
            <person name="Masukawa M."/>
            <person name="Arikawa K."/>
            <person name="Chiden Y."/>
            <person name="Hayashi M."/>
            <person name="Okamoto M."/>
            <person name="Ando T."/>
            <person name="Aoki H."/>
            <person name="Arita K."/>
            <person name="Hamada M."/>
            <person name="Harada C."/>
            <person name="Hijishita S."/>
            <person name="Honda M."/>
            <person name="Ichikawa Y."/>
            <person name="Idonuma A."/>
            <person name="Iijima M."/>
            <person name="Ikeda M."/>
            <person name="Ikeno M."/>
            <person name="Ito S."/>
            <person name="Ito T."/>
            <person name="Ito Y."/>
            <person name="Ito Y."/>
            <person name="Iwabuchi A."/>
            <person name="Kamiya K."/>
            <person name="Karasawa W."/>
            <person name="Katagiri S."/>
            <person name="Kikuta A."/>
            <person name="Kobayashi N."/>
            <person name="Kono I."/>
            <person name="Machita K."/>
            <person name="Maehara T."/>
            <person name="Mizuno H."/>
            <person name="Mizubayashi T."/>
            <person name="Mukai Y."/>
            <person name="Nagasaki H."/>
            <person name="Nakashima M."/>
            <person name="Nakama Y."/>
            <person name="Nakamichi Y."/>
            <person name="Nakamura M."/>
            <person name="Namiki N."/>
            <person name="Negishi M."/>
            <person name="Ohta I."/>
            <person name="Ono N."/>
            <person name="Saji S."/>
            <person name="Sakai K."/>
            <person name="Shibata M."/>
            <person name="Shimokawa T."/>
            <person name="Shomura A."/>
            <person name="Song J."/>
            <person name="Takazaki Y."/>
            <person name="Terasawa K."/>
            <person name="Tsuji K."/>
            <person name="Waki K."/>
            <person name="Yamagata H."/>
            <person name="Yamane H."/>
            <person name="Yoshiki S."/>
            <person name="Yoshihara R."/>
            <person name="Yukawa K."/>
            <person name="Zhong H."/>
            <person name="Iwama H."/>
            <person name="Endo T."/>
            <person name="Ito H."/>
            <person name="Hahn J.H."/>
            <person name="Kim H.-I."/>
            <person name="Eun M.-Y."/>
            <person name="Yano M."/>
            <person name="Jiang J."/>
            <person name="Gojobori T."/>
        </authorList>
    </citation>
    <scope>NUCLEOTIDE SEQUENCE [LARGE SCALE GENOMIC DNA]</scope>
    <source>
        <strain>cv. Nipponbare</strain>
    </source>
</reference>
<reference key="2">
    <citation type="journal article" date="2005" name="Nature">
        <title>The map-based sequence of the rice genome.</title>
        <authorList>
            <consortium name="International rice genome sequencing project (IRGSP)"/>
        </authorList>
    </citation>
    <scope>NUCLEOTIDE SEQUENCE [LARGE SCALE GENOMIC DNA]</scope>
    <source>
        <strain>cv. Nipponbare</strain>
    </source>
</reference>
<reference key="3">
    <citation type="journal article" date="2013" name="Rice">
        <title>Improvement of the Oryza sativa Nipponbare reference genome using next generation sequence and optical map data.</title>
        <authorList>
            <person name="Kawahara Y."/>
            <person name="de la Bastide M."/>
            <person name="Hamilton J.P."/>
            <person name="Kanamori H."/>
            <person name="McCombie W.R."/>
            <person name="Ouyang S."/>
            <person name="Schwartz D.C."/>
            <person name="Tanaka T."/>
            <person name="Wu J."/>
            <person name="Zhou S."/>
            <person name="Childs K.L."/>
            <person name="Davidson R.M."/>
            <person name="Lin H."/>
            <person name="Quesada-Ocampo L."/>
            <person name="Vaillancourt B."/>
            <person name="Sakai H."/>
            <person name="Lee S.S."/>
            <person name="Kim J."/>
            <person name="Numa H."/>
            <person name="Itoh T."/>
            <person name="Buell C.R."/>
            <person name="Matsumoto T."/>
        </authorList>
    </citation>
    <scope>GENOME REANNOTATION</scope>
    <source>
        <strain>cv. Nipponbare</strain>
    </source>
</reference>
<reference key="4">
    <citation type="journal article" date="2005" name="PLoS Biol.">
        <title>The genomes of Oryza sativa: a history of duplications.</title>
        <authorList>
            <person name="Yu J."/>
            <person name="Wang J."/>
            <person name="Lin W."/>
            <person name="Li S."/>
            <person name="Li H."/>
            <person name="Zhou J."/>
            <person name="Ni P."/>
            <person name="Dong W."/>
            <person name="Hu S."/>
            <person name="Zeng C."/>
            <person name="Zhang J."/>
            <person name="Zhang Y."/>
            <person name="Li R."/>
            <person name="Xu Z."/>
            <person name="Li S."/>
            <person name="Li X."/>
            <person name="Zheng H."/>
            <person name="Cong L."/>
            <person name="Lin L."/>
            <person name="Yin J."/>
            <person name="Geng J."/>
            <person name="Li G."/>
            <person name="Shi J."/>
            <person name="Liu J."/>
            <person name="Lv H."/>
            <person name="Li J."/>
            <person name="Wang J."/>
            <person name="Deng Y."/>
            <person name="Ran L."/>
            <person name="Shi X."/>
            <person name="Wang X."/>
            <person name="Wu Q."/>
            <person name="Li C."/>
            <person name="Ren X."/>
            <person name="Wang J."/>
            <person name="Wang X."/>
            <person name="Li D."/>
            <person name="Liu D."/>
            <person name="Zhang X."/>
            <person name="Ji Z."/>
            <person name="Zhao W."/>
            <person name="Sun Y."/>
            <person name="Zhang Z."/>
            <person name="Bao J."/>
            <person name="Han Y."/>
            <person name="Dong L."/>
            <person name="Ji J."/>
            <person name="Chen P."/>
            <person name="Wu S."/>
            <person name="Liu J."/>
            <person name="Xiao Y."/>
            <person name="Bu D."/>
            <person name="Tan J."/>
            <person name="Yang L."/>
            <person name="Ye C."/>
            <person name="Zhang J."/>
            <person name="Xu J."/>
            <person name="Zhou Y."/>
            <person name="Yu Y."/>
            <person name="Zhang B."/>
            <person name="Zhuang S."/>
            <person name="Wei H."/>
            <person name="Liu B."/>
            <person name="Lei M."/>
            <person name="Yu H."/>
            <person name="Li Y."/>
            <person name="Xu H."/>
            <person name="Wei S."/>
            <person name="He X."/>
            <person name="Fang L."/>
            <person name="Zhang Z."/>
            <person name="Zhang Y."/>
            <person name="Huang X."/>
            <person name="Su Z."/>
            <person name="Tong W."/>
            <person name="Li J."/>
            <person name="Tong Z."/>
            <person name="Li S."/>
            <person name="Ye J."/>
            <person name="Wang L."/>
            <person name="Fang L."/>
            <person name="Lei T."/>
            <person name="Chen C.-S."/>
            <person name="Chen H.-C."/>
            <person name="Xu Z."/>
            <person name="Li H."/>
            <person name="Huang H."/>
            <person name="Zhang F."/>
            <person name="Xu H."/>
            <person name="Li N."/>
            <person name="Zhao C."/>
            <person name="Li S."/>
            <person name="Dong L."/>
            <person name="Huang Y."/>
            <person name="Li L."/>
            <person name="Xi Y."/>
            <person name="Qi Q."/>
            <person name="Li W."/>
            <person name="Zhang B."/>
            <person name="Hu W."/>
            <person name="Zhang Y."/>
            <person name="Tian X."/>
            <person name="Jiao Y."/>
            <person name="Liang X."/>
            <person name="Jin J."/>
            <person name="Gao L."/>
            <person name="Zheng W."/>
            <person name="Hao B."/>
            <person name="Liu S.-M."/>
            <person name="Wang W."/>
            <person name="Yuan L."/>
            <person name="Cao M."/>
            <person name="McDermott J."/>
            <person name="Samudrala R."/>
            <person name="Wang J."/>
            <person name="Wong G.K.-S."/>
            <person name="Yang H."/>
        </authorList>
    </citation>
    <scope>NUCLEOTIDE SEQUENCE [LARGE SCALE GENOMIC DNA]</scope>
    <source>
        <strain>cv. Nipponbare</strain>
    </source>
</reference>
<name>GL12_ORYSJ</name>
<sequence length="224" mass="23276">MASSRSVVLRVLVAVAVVAAAGAPRLAVADSPPLQDICVADLRAATAVDGFPCKPTASVVSDDFFCDAIVQAPSTSNPFGVNSTRATVSAFPGLNTLGLSITRTDLAPGGLNPPHSHPRASELVLVLSGEVMVGFTTAANRLFSKVVREKELFVVPRGLQHFQLNVGAGNASFVAMFDSQSPGLVTPTFALFATQPAMPMEVLAKTFLMGEDEVGAIKSKFAGF</sequence>
<dbReference type="EMBL" id="AP003023">
    <property type="protein sequence ID" value="BAB44028.1"/>
    <property type="molecule type" value="Genomic_DNA"/>
</dbReference>
<dbReference type="EMBL" id="AP003381">
    <property type="protein sequence ID" value="BAB86506.1"/>
    <property type="molecule type" value="Genomic_DNA"/>
</dbReference>
<dbReference type="EMBL" id="AP014957">
    <property type="protein sequence ID" value="BAS73925.1"/>
    <property type="molecule type" value="Genomic_DNA"/>
</dbReference>
<dbReference type="EMBL" id="CM000138">
    <property type="protein sequence ID" value="EAZ13253.1"/>
    <property type="molecule type" value="Genomic_DNA"/>
</dbReference>
<dbReference type="SMR" id="Q94JF3"/>
<dbReference type="FunCoup" id="Q94JF3">
    <property type="interactions" value="43"/>
</dbReference>
<dbReference type="STRING" id="39947.Q94JF3"/>
<dbReference type="PaxDb" id="39947-Q94JF3"/>
<dbReference type="EnsemblPlants" id="Os01t0705100-00">
    <property type="protein sequence ID" value="Os01t0705100-00"/>
    <property type="gene ID" value="Os01g0705100"/>
</dbReference>
<dbReference type="GeneID" id="107277647"/>
<dbReference type="Gramene" id="Os01t0705100-00">
    <property type="protein sequence ID" value="Os01t0705100-00"/>
    <property type="gene ID" value="Os01g0705100"/>
</dbReference>
<dbReference type="KEGG" id="osa:107277647"/>
<dbReference type="eggNOG" id="ENOG502QSRM">
    <property type="taxonomic scope" value="Eukaryota"/>
</dbReference>
<dbReference type="HOGENOM" id="CLU_015790_0_3_1"/>
<dbReference type="InParanoid" id="Q94JF3"/>
<dbReference type="OMA" id="FVCKPPA"/>
<dbReference type="OrthoDB" id="1921208at2759"/>
<dbReference type="Proteomes" id="UP000000763">
    <property type="component" value="Chromosome 1"/>
</dbReference>
<dbReference type="Proteomes" id="UP000007752">
    <property type="component" value="Chromosome 1"/>
</dbReference>
<dbReference type="Proteomes" id="UP000059680">
    <property type="component" value="Chromosome 1"/>
</dbReference>
<dbReference type="GO" id="GO:0048046">
    <property type="term" value="C:apoplast"/>
    <property type="evidence" value="ECO:0007669"/>
    <property type="project" value="UniProtKB-SubCell"/>
</dbReference>
<dbReference type="GO" id="GO:0030145">
    <property type="term" value="F:manganese ion binding"/>
    <property type="evidence" value="ECO:0007669"/>
    <property type="project" value="InterPro"/>
</dbReference>
<dbReference type="CDD" id="cd02241">
    <property type="entry name" value="cupin_OxOx"/>
    <property type="match status" value="1"/>
</dbReference>
<dbReference type="FunFam" id="2.60.120.10:FF:000005">
    <property type="entry name" value="Germin-like protein subfamily 1 member 8"/>
    <property type="match status" value="1"/>
</dbReference>
<dbReference type="Gene3D" id="2.60.120.10">
    <property type="entry name" value="Jelly Rolls"/>
    <property type="match status" value="1"/>
</dbReference>
<dbReference type="InterPro" id="IPR006045">
    <property type="entry name" value="Cupin_1"/>
</dbReference>
<dbReference type="InterPro" id="IPR001929">
    <property type="entry name" value="Germin"/>
</dbReference>
<dbReference type="InterPro" id="IPR019780">
    <property type="entry name" value="Germin_Mn-BS"/>
</dbReference>
<dbReference type="InterPro" id="IPR014710">
    <property type="entry name" value="RmlC-like_jellyroll"/>
</dbReference>
<dbReference type="InterPro" id="IPR011051">
    <property type="entry name" value="RmlC_Cupin_sf"/>
</dbReference>
<dbReference type="PANTHER" id="PTHR31238">
    <property type="entry name" value="GERMIN-LIKE PROTEIN SUBFAMILY 3 MEMBER 3"/>
    <property type="match status" value="1"/>
</dbReference>
<dbReference type="Pfam" id="PF00190">
    <property type="entry name" value="Cupin_1"/>
    <property type="match status" value="1"/>
</dbReference>
<dbReference type="PRINTS" id="PR00325">
    <property type="entry name" value="GERMIN"/>
</dbReference>
<dbReference type="SMART" id="SM00835">
    <property type="entry name" value="Cupin_1"/>
    <property type="match status" value="1"/>
</dbReference>
<dbReference type="SUPFAM" id="SSF51182">
    <property type="entry name" value="RmlC-like cupins"/>
    <property type="match status" value="1"/>
</dbReference>
<dbReference type="PROSITE" id="PS00725">
    <property type="entry name" value="GERMIN"/>
    <property type="match status" value="1"/>
</dbReference>
<feature type="signal peptide" evidence="2">
    <location>
        <begin position="1"/>
        <end position="29"/>
    </location>
</feature>
<feature type="chain" id="PRO_0000365495" description="Germin-like protein 1-2">
    <location>
        <begin position="30"/>
        <end position="224"/>
    </location>
</feature>
<feature type="domain" description="Cupin type-1" evidence="2">
    <location>
        <begin position="67"/>
        <end position="215"/>
    </location>
</feature>
<feature type="binding site" evidence="1">
    <location>
        <position position="115"/>
    </location>
    <ligand>
        <name>Mn(2+)</name>
        <dbReference type="ChEBI" id="CHEBI:29035"/>
    </ligand>
</feature>
<feature type="binding site" evidence="1">
    <location>
        <position position="117"/>
    </location>
    <ligand>
        <name>Mn(2+)</name>
        <dbReference type="ChEBI" id="CHEBI:29035"/>
    </ligand>
</feature>
<feature type="binding site" evidence="1">
    <location>
        <position position="122"/>
    </location>
    <ligand>
        <name>Mn(2+)</name>
        <dbReference type="ChEBI" id="CHEBI:29035"/>
    </ligand>
</feature>
<feature type="binding site" evidence="1">
    <location>
        <position position="161"/>
    </location>
    <ligand>
        <name>Mn(2+)</name>
        <dbReference type="ChEBI" id="CHEBI:29035"/>
    </ligand>
</feature>
<feature type="glycosylation site" description="N-linked (GlcNAc...) asparagine" evidence="2">
    <location>
        <position position="82"/>
    </location>
</feature>
<feature type="glycosylation site" description="N-linked (GlcNAc...) asparagine" evidence="2">
    <location>
        <position position="170"/>
    </location>
</feature>
<feature type="disulfide bond" evidence="1">
    <location>
        <begin position="38"/>
        <end position="53"/>
    </location>
</feature>
<comment type="function">
    <text>May play a role in plant defense. Probably has no oxalate oxidase activity even if the active site is conserved.</text>
</comment>
<comment type="subunit">
    <text evidence="1">Oligomer (believed to be a pentamer but probably hexamer).</text>
</comment>
<comment type="subcellular location">
    <subcellularLocation>
        <location evidence="1">Secreted</location>
        <location evidence="1">Extracellular space</location>
        <location evidence="1">Apoplast</location>
    </subcellularLocation>
</comment>
<comment type="similarity">
    <text evidence="3">Belongs to the germin family.</text>
</comment>
<evidence type="ECO:0000250" key="1"/>
<evidence type="ECO:0000255" key="2"/>
<evidence type="ECO:0000305" key="3"/>